<accession>Q31NM4</accession>
<protein>
    <recommendedName>
        <fullName evidence="1">Methylenetetrahydrofolate--tRNA-(uracil-5-)-methyltransferase TrmFO</fullName>
        <ecNumber evidence="1">2.1.1.74</ecNumber>
    </recommendedName>
    <alternativeName>
        <fullName evidence="1">Folate-dependent tRNA (uracil-5-)-methyltransferase</fullName>
    </alternativeName>
    <alternativeName>
        <fullName evidence="1">Folate-dependent tRNA(M-5-U54)-methyltransferase</fullName>
    </alternativeName>
</protein>
<dbReference type="EC" id="2.1.1.74" evidence="1"/>
<dbReference type="EMBL" id="CP000100">
    <property type="protein sequence ID" value="ABB57345.1"/>
    <property type="molecule type" value="Genomic_DNA"/>
</dbReference>
<dbReference type="RefSeq" id="WP_011242552.1">
    <property type="nucleotide sequence ID" value="NZ_JACJTX010000003.1"/>
</dbReference>
<dbReference type="SMR" id="Q31NM4"/>
<dbReference type="STRING" id="1140.Synpcc7942_1315"/>
<dbReference type="PaxDb" id="1140-Synpcc7942_1315"/>
<dbReference type="GeneID" id="72430176"/>
<dbReference type="KEGG" id="syf:Synpcc7942_1315"/>
<dbReference type="eggNOG" id="COG1206">
    <property type="taxonomic scope" value="Bacteria"/>
</dbReference>
<dbReference type="HOGENOM" id="CLU_033057_1_0_3"/>
<dbReference type="OrthoDB" id="9803114at2"/>
<dbReference type="BioCyc" id="SYNEL:SYNPCC7942_1315-MONOMER"/>
<dbReference type="Proteomes" id="UP000889800">
    <property type="component" value="Chromosome"/>
</dbReference>
<dbReference type="GO" id="GO:0005829">
    <property type="term" value="C:cytosol"/>
    <property type="evidence" value="ECO:0007669"/>
    <property type="project" value="TreeGrafter"/>
</dbReference>
<dbReference type="GO" id="GO:0050660">
    <property type="term" value="F:flavin adenine dinucleotide binding"/>
    <property type="evidence" value="ECO:0007669"/>
    <property type="project" value="UniProtKB-UniRule"/>
</dbReference>
<dbReference type="GO" id="GO:0047151">
    <property type="term" value="F:tRNA (uracil(54)-C5)-methyltransferase activity, 5,10-methylenetetrahydrofolate-dependent"/>
    <property type="evidence" value="ECO:0007669"/>
    <property type="project" value="UniProtKB-UniRule"/>
</dbReference>
<dbReference type="GO" id="GO:0030488">
    <property type="term" value="P:tRNA methylation"/>
    <property type="evidence" value="ECO:0007669"/>
    <property type="project" value="TreeGrafter"/>
</dbReference>
<dbReference type="GO" id="GO:0002098">
    <property type="term" value="P:tRNA wobble uridine modification"/>
    <property type="evidence" value="ECO:0007669"/>
    <property type="project" value="TreeGrafter"/>
</dbReference>
<dbReference type="Gene3D" id="3.50.50.60">
    <property type="entry name" value="FAD/NAD(P)-binding domain"/>
    <property type="match status" value="2"/>
</dbReference>
<dbReference type="HAMAP" id="MF_01037">
    <property type="entry name" value="TrmFO"/>
    <property type="match status" value="1"/>
</dbReference>
<dbReference type="InterPro" id="IPR036188">
    <property type="entry name" value="FAD/NAD-bd_sf"/>
</dbReference>
<dbReference type="InterPro" id="IPR002218">
    <property type="entry name" value="MnmG-rel"/>
</dbReference>
<dbReference type="InterPro" id="IPR040131">
    <property type="entry name" value="MnmG_N"/>
</dbReference>
<dbReference type="InterPro" id="IPR004417">
    <property type="entry name" value="TrmFO"/>
</dbReference>
<dbReference type="NCBIfam" id="TIGR00137">
    <property type="entry name" value="gid_trmFO"/>
    <property type="match status" value="1"/>
</dbReference>
<dbReference type="NCBIfam" id="NF003739">
    <property type="entry name" value="PRK05335.1"/>
    <property type="match status" value="1"/>
</dbReference>
<dbReference type="PANTHER" id="PTHR11806">
    <property type="entry name" value="GLUCOSE INHIBITED DIVISION PROTEIN A"/>
    <property type="match status" value="1"/>
</dbReference>
<dbReference type="PANTHER" id="PTHR11806:SF2">
    <property type="entry name" value="METHYLENETETRAHYDROFOLATE--TRNA-(URACIL-5-)-METHYLTRANSFERASE TRMFO"/>
    <property type="match status" value="1"/>
</dbReference>
<dbReference type="Pfam" id="PF01134">
    <property type="entry name" value="GIDA"/>
    <property type="match status" value="1"/>
</dbReference>
<dbReference type="PRINTS" id="PR00411">
    <property type="entry name" value="PNDRDTASEI"/>
</dbReference>
<dbReference type="SUPFAM" id="SSF51905">
    <property type="entry name" value="FAD/NAD(P)-binding domain"/>
    <property type="match status" value="1"/>
</dbReference>
<gene>
    <name evidence="1" type="primary">trmFO</name>
    <name type="synonym">gid</name>
    <name type="ordered locus">Synpcc7942_1315</name>
</gene>
<keyword id="KW-0963">Cytoplasm</keyword>
<keyword id="KW-0274">FAD</keyword>
<keyword id="KW-0285">Flavoprotein</keyword>
<keyword id="KW-0489">Methyltransferase</keyword>
<keyword id="KW-0520">NAD</keyword>
<keyword id="KW-0521">NADP</keyword>
<keyword id="KW-1185">Reference proteome</keyword>
<keyword id="KW-0808">Transferase</keyword>
<keyword id="KW-0819">tRNA processing</keyword>
<organism>
    <name type="scientific">Synechococcus elongatus (strain ATCC 33912 / PCC 7942 / FACHB-805)</name>
    <name type="common">Anacystis nidulans R2</name>
    <dbReference type="NCBI Taxonomy" id="1140"/>
    <lineage>
        <taxon>Bacteria</taxon>
        <taxon>Bacillati</taxon>
        <taxon>Cyanobacteriota</taxon>
        <taxon>Cyanophyceae</taxon>
        <taxon>Synechococcales</taxon>
        <taxon>Synechococcaceae</taxon>
        <taxon>Synechococcus</taxon>
    </lineage>
</organism>
<proteinExistence type="inferred from homology"/>
<name>TRMFO_SYNE7</name>
<comment type="function">
    <text evidence="1">Catalyzes the folate-dependent formation of 5-methyl-uridine at position 54 (M-5-U54) in all tRNAs.</text>
</comment>
<comment type="catalytic activity">
    <reaction evidence="1">
        <text>uridine(54) in tRNA + (6R)-5,10-methylene-5,6,7,8-tetrahydrofolate + NADH + H(+) = 5-methyluridine(54) in tRNA + (6S)-5,6,7,8-tetrahydrofolate + NAD(+)</text>
        <dbReference type="Rhea" id="RHEA:16873"/>
        <dbReference type="Rhea" id="RHEA-COMP:10167"/>
        <dbReference type="Rhea" id="RHEA-COMP:10193"/>
        <dbReference type="ChEBI" id="CHEBI:15378"/>
        <dbReference type="ChEBI" id="CHEBI:15636"/>
        <dbReference type="ChEBI" id="CHEBI:57453"/>
        <dbReference type="ChEBI" id="CHEBI:57540"/>
        <dbReference type="ChEBI" id="CHEBI:57945"/>
        <dbReference type="ChEBI" id="CHEBI:65315"/>
        <dbReference type="ChEBI" id="CHEBI:74447"/>
        <dbReference type="EC" id="2.1.1.74"/>
    </reaction>
</comment>
<comment type="catalytic activity">
    <reaction evidence="1">
        <text>uridine(54) in tRNA + (6R)-5,10-methylene-5,6,7,8-tetrahydrofolate + NADPH + H(+) = 5-methyluridine(54) in tRNA + (6S)-5,6,7,8-tetrahydrofolate + NADP(+)</text>
        <dbReference type="Rhea" id="RHEA:62372"/>
        <dbReference type="Rhea" id="RHEA-COMP:10167"/>
        <dbReference type="Rhea" id="RHEA-COMP:10193"/>
        <dbReference type="ChEBI" id="CHEBI:15378"/>
        <dbReference type="ChEBI" id="CHEBI:15636"/>
        <dbReference type="ChEBI" id="CHEBI:57453"/>
        <dbReference type="ChEBI" id="CHEBI:57783"/>
        <dbReference type="ChEBI" id="CHEBI:58349"/>
        <dbReference type="ChEBI" id="CHEBI:65315"/>
        <dbReference type="ChEBI" id="CHEBI:74447"/>
        <dbReference type="EC" id="2.1.1.74"/>
    </reaction>
</comment>
<comment type="cofactor">
    <cofactor evidence="1">
        <name>FAD</name>
        <dbReference type="ChEBI" id="CHEBI:57692"/>
    </cofactor>
</comment>
<comment type="subcellular location">
    <subcellularLocation>
        <location evidence="1">Cytoplasm</location>
    </subcellularLocation>
</comment>
<comment type="similarity">
    <text evidence="1">Belongs to the MnmG family. TrmFO subfamily.</text>
</comment>
<evidence type="ECO:0000255" key="1">
    <source>
        <dbReference type="HAMAP-Rule" id="MF_01037"/>
    </source>
</evidence>
<reference key="1">
    <citation type="submission" date="2005-08" db="EMBL/GenBank/DDBJ databases">
        <title>Complete sequence of chromosome 1 of Synechococcus elongatus PCC 7942.</title>
        <authorList>
            <consortium name="US DOE Joint Genome Institute"/>
            <person name="Copeland A."/>
            <person name="Lucas S."/>
            <person name="Lapidus A."/>
            <person name="Barry K."/>
            <person name="Detter J.C."/>
            <person name="Glavina T."/>
            <person name="Hammon N."/>
            <person name="Israni S."/>
            <person name="Pitluck S."/>
            <person name="Schmutz J."/>
            <person name="Larimer F."/>
            <person name="Land M."/>
            <person name="Kyrpides N."/>
            <person name="Lykidis A."/>
            <person name="Golden S."/>
            <person name="Richardson P."/>
        </authorList>
    </citation>
    <scope>NUCLEOTIDE SEQUENCE [LARGE SCALE GENOMIC DNA]</scope>
    <source>
        <strain>ATCC 33912 / PCC 7942 / FACHB-805</strain>
    </source>
</reference>
<sequence length="466" mass="51388">MAAISQPVIVIGAGLAGTEAAWQIAEAGVPVILYEMRPQRQSPAHHSESFAELVCSNSFGAMASDRAAGLLHEELRRLGSLVFSKASEHQVPAGGALAVDRALFSEDLTRTVADHPLVEIRREELRSLPTEGIVVLCTGPLTSPDLAEDLQRFTGQDYCSFFDAASPIVTGESIDQAIAFRASRYDKGEAAYLNCPLNRDQYLAFREALVTAEQAELKDFEQESAKFFEGCLPIEELARRGEDTMRYGPLKPVGLFDARLGDWRDPENRSRRPYAIVQLRQEDRAGNLWNLVGFQTNLRWGEQKRIFQMIPGLSQAEFVRFGVMHRNTFVNAPQLLDASLQFRQRPTLLAAGQLIGTEGYSAAVAGGWLAGTNAARLALGRSPLVLPDTLVSGSLFRFISSAEPKYFQPMPPNFGILPNLEQPPRNKKDRYAAYRDRALQDLRDWQQTHAIGNLSPSTGLATTAIA</sequence>
<feature type="chain" id="PRO_1000063941" description="Methylenetetrahydrofolate--tRNA-(uracil-5-)-methyltransferase TrmFO">
    <location>
        <begin position="1"/>
        <end position="466"/>
    </location>
</feature>
<feature type="binding site" evidence="1">
    <location>
        <begin position="12"/>
        <end position="17"/>
    </location>
    <ligand>
        <name>FAD</name>
        <dbReference type="ChEBI" id="CHEBI:57692"/>
    </ligand>
</feature>